<organism>
    <name type="scientific">Polaromonas sp. (strain JS666 / ATCC BAA-500)</name>
    <dbReference type="NCBI Taxonomy" id="296591"/>
    <lineage>
        <taxon>Bacteria</taxon>
        <taxon>Pseudomonadati</taxon>
        <taxon>Pseudomonadota</taxon>
        <taxon>Betaproteobacteria</taxon>
        <taxon>Burkholderiales</taxon>
        <taxon>Comamonadaceae</taxon>
        <taxon>Polaromonas</taxon>
    </lineage>
</organism>
<name>TRPD_POLSJ</name>
<gene>
    <name evidence="1" type="primary">trpD</name>
    <name type="ordered locus">Bpro_4452</name>
</gene>
<protein>
    <recommendedName>
        <fullName evidence="1">Anthranilate phosphoribosyltransferase</fullName>
        <ecNumber evidence="1">2.4.2.18</ecNumber>
    </recommendedName>
</protein>
<proteinExistence type="inferred from homology"/>
<sequence length="347" mass="36880">MPHTHKITPQEALQRTIEHREIFHDEMLHIMRLIMSGEMSPVMMAALITGLRVKKETIGEITAAAQVMREFSTKVHVADKTHLVDIVGTGGDGSHTFNISTCSMFVAAAAGAKVSKHGGRSVSSKSGSADVMEALGININLMPEAIAKCIEEAGVGFMFAPNHHPAMKNVAPIRKELGVRTIFNILGPLTNPASAPNILMGVFHPDLVGIQIRALQRLGAEHALVVYGKDGMDEVSLGAATIVGELKNGEITEYEIHPEDFSMTMASNRALRVETPEQSKAMLLGVLDNQPGAARDIVILNAGAALYAANVASSMQEGIVKARAALESGAAKARLAQLVSITQTLAA</sequence>
<keyword id="KW-0028">Amino-acid biosynthesis</keyword>
<keyword id="KW-0057">Aromatic amino acid biosynthesis</keyword>
<keyword id="KW-0328">Glycosyltransferase</keyword>
<keyword id="KW-0460">Magnesium</keyword>
<keyword id="KW-0479">Metal-binding</keyword>
<keyword id="KW-1185">Reference proteome</keyword>
<keyword id="KW-0808">Transferase</keyword>
<keyword id="KW-0822">Tryptophan biosynthesis</keyword>
<evidence type="ECO:0000255" key="1">
    <source>
        <dbReference type="HAMAP-Rule" id="MF_00211"/>
    </source>
</evidence>
<accession>Q123F3</accession>
<comment type="function">
    <text evidence="1">Catalyzes the transfer of the phosphoribosyl group of 5-phosphorylribose-1-pyrophosphate (PRPP) to anthranilate to yield N-(5'-phosphoribosyl)-anthranilate (PRA).</text>
</comment>
<comment type="catalytic activity">
    <reaction evidence="1">
        <text>N-(5-phospho-beta-D-ribosyl)anthranilate + diphosphate = 5-phospho-alpha-D-ribose 1-diphosphate + anthranilate</text>
        <dbReference type="Rhea" id="RHEA:11768"/>
        <dbReference type="ChEBI" id="CHEBI:16567"/>
        <dbReference type="ChEBI" id="CHEBI:18277"/>
        <dbReference type="ChEBI" id="CHEBI:33019"/>
        <dbReference type="ChEBI" id="CHEBI:58017"/>
        <dbReference type="EC" id="2.4.2.18"/>
    </reaction>
</comment>
<comment type="cofactor">
    <cofactor evidence="1">
        <name>Mg(2+)</name>
        <dbReference type="ChEBI" id="CHEBI:18420"/>
    </cofactor>
    <text evidence="1">Binds 2 magnesium ions per monomer.</text>
</comment>
<comment type="pathway">
    <text evidence="1">Amino-acid biosynthesis; L-tryptophan biosynthesis; L-tryptophan from chorismate: step 2/5.</text>
</comment>
<comment type="subunit">
    <text evidence="1">Homodimer.</text>
</comment>
<comment type="similarity">
    <text evidence="1">Belongs to the anthranilate phosphoribosyltransferase family.</text>
</comment>
<feature type="chain" id="PRO_0000325447" description="Anthranilate phosphoribosyltransferase">
    <location>
        <begin position="1"/>
        <end position="347"/>
    </location>
</feature>
<feature type="binding site" evidence="1">
    <location>
        <position position="88"/>
    </location>
    <ligand>
        <name>5-phospho-alpha-D-ribose 1-diphosphate</name>
        <dbReference type="ChEBI" id="CHEBI:58017"/>
    </ligand>
</feature>
<feature type="binding site" evidence="1">
    <location>
        <position position="88"/>
    </location>
    <ligand>
        <name>anthranilate</name>
        <dbReference type="ChEBI" id="CHEBI:16567"/>
        <label>1</label>
    </ligand>
</feature>
<feature type="binding site" evidence="1">
    <location>
        <begin position="91"/>
        <end position="92"/>
    </location>
    <ligand>
        <name>5-phospho-alpha-D-ribose 1-diphosphate</name>
        <dbReference type="ChEBI" id="CHEBI:58017"/>
    </ligand>
</feature>
<feature type="binding site" evidence="1">
    <location>
        <position position="96"/>
    </location>
    <ligand>
        <name>5-phospho-alpha-D-ribose 1-diphosphate</name>
        <dbReference type="ChEBI" id="CHEBI:58017"/>
    </ligand>
</feature>
<feature type="binding site" evidence="1">
    <location>
        <begin position="98"/>
        <end position="101"/>
    </location>
    <ligand>
        <name>5-phospho-alpha-D-ribose 1-diphosphate</name>
        <dbReference type="ChEBI" id="CHEBI:58017"/>
    </ligand>
</feature>
<feature type="binding site" evidence="1">
    <location>
        <position position="100"/>
    </location>
    <ligand>
        <name>Mg(2+)</name>
        <dbReference type="ChEBI" id="CHEBI:18420"/>
        <label>1</label>
    </ligand>
</feature>
<feature type="binding site" evidence="1">
    <location>
        <begin position="116"/>
        <end position="124"/>
    </location>
    <ligand>
        <name>5-phospho-alpha-D-ribose 1-diphosphate</name>
        <dbReference type="ChEBI" id="CHEBI:58017"/>
    </ligand>
</feature>
<feature type="binding site" evidence="1">
    <location>
        <position position="128"/>
    </location>
    <ligand>
        <name>5-phospho-alpha-D-ribose 1-diphosphate</name>
        <dbReference type="ChEBI" id="CHEBI:58017"/>
    </ligand>
</feature>
<feature type="binding site" evidence="1">
    <location>
        <position position="174"/>
    </location>
    <ligand>
        <name>anthranilate</name>
        <dbReference type="ChEBI" id="CHEBI:16567"/>
        <label>2</label>
    </ligand>
</feature>
<feature type="binding site" evidence="1">
    <location>
        <position position="233"/>
    </location>
    <ligand>
        <name>Mg(2+)</name>
        <dbReference type="ChEBI" id="CHEBI:18420"/>
        <label>2</label>
    </ligand>
</feature>
<feature type="binding site" evidence="1">
    <location>
        <position position="234"/>
    </location>
    <ligand>
        <name>Mg(2+)</name>
        <dbReference type="ChEBI" id="CHEBI:18420"/>
        <label>1</label>
    </ligand>
</feature>
<feature type="binding site" evidence="1">
    <location>
        <position position="234"/>
    </location>
    <ligand>
        <name>Mg(2+)</name>
        <dbReference type="ChEBI" id="CHEBI:18420"/>
        <label>2</label>
    </ligand>
</feature>
<dbReference type="EC" id="2.4.2.18" evidence="1"/>
<dbReference type="EMBL" id="CP000316">
    <property type="protein sequence ID" value="ABE46339.1"/>
    <property type="molecule type" value="Genomic_DNA"/>
</dbReference>
<dbReference type="RefSeq" id="WP_011485327.1">
    <property type="nucleotide sequence ID" value="NC_007948.1"/>
</dbReference>
<dbReference type="SMR" id="Q123F3"/>
<dbReference type="STRING" id="296591.Bpro_4452"/>
<dbReference type="KEGG" id="pol:Bpro_4452"/>
<dbReference type="eggNOG" id="COG0547">
    <property type="taxonomic scope" value="Bacteria"/>
</dbReference>
<dbReference type="HOGENOM" id="CLU_034315_2_1_4"/>
<dbReference type="OrthoDB" id="9806430at2"/>
<dbReference type="UniPathway" id="UPA00035">
    <property type="reaction ID" value="UER00041"/>
</dbReference>
<dbReference type="Proteomes" id="UP000001983">
    <property type="component" value="Chromosome"/>
</dbReference>
<dbReference type="GO" id="GO:0005829">
    <property type="term" value="C:cytosol"/>
    <property type="evidence" value="ECO:0007669"/>
    <property type="project" value="TreeGrafter"/>
</dbReference>
<dbReference type="GO" id="GO:0004048">
    <property type="term" value="F:anthranilate phosphoribosyltransferase activity"/>
    <property type="evidence" value="ECO:0007669"/>
    <property type="project" value="UniProtKB-UniRule"/>
</dbReference>
<dbReference type="GO" id="GO:0000287">
    <property type="term" value="F:magnesium ion binding"/>
    <property type="evidence" value="ECO:0007669"/>
    <property type="project" value="UniProtKB-UniRule"/>
</dbReference>
<dbReference type="GO" id="GO:0000162">
    <property type="term" value="P:L-tryptophan biosynthetic process"/>
    <property type="evidence" value="ECO:0007669"/>
    <property type="project" value="UniProtKB-UniRule"/>
</dbReference>
<dbReference type="FunFam" id="1.20.970.10:FF:000006">
    <property type="entry name" value="Anthranilate phosphoribosyltransferase"/>
    <property type="match status" value="1"/>
</dbReference>
<dbReference type="FunFam" id="3.40.1030.10:FF:000002">
    <property type="entry name" value="Anthranilate phosphoribosyltransferase"/>
    <property type="match status" value="1"/>
</dbReference>
<dbReference type="Gene3D" id="3.40.1030.10">
    <property type="entry name" value="Nucleoside phosphorylase/phosphoribosyltransferase catalytic domain"/>
    <property type="match status" value="1"/>
</dbReference>
<dbReference type="Gene3D" id="1.20.970.10">
    <property type="entry name" value="Transferase, Pyrimidine Nucleoside Phosphorylase, Chain C"/>
    <property type="match status" value="1"/>
</dbReference>
<dbReference type="HAMAP" id="MF_00211">
    <property type="entry name" value="TrpD"/>
    <property type="match status" value="1"/>
</dbReference>
<dbReference type="InterPro" id="IPR005940">
    <property type="entry name" value="Anthranilate_Pribosyl_Tfrase"/>
</dbReference>
<dbReference type="InterPro" id="IPR000312">
    <property type="entry name" value="Glycosyl_Trfase_fam3"/>
</dbReference>
<dbReference type="InterPro" id="IPR017459">
    <property type="entry name" value="Glycosyl_Trfase_fam3_N_dom"/>
</dbReference>
<dbReference type="InterPro" id="IPR036320">
    <property type="entry name" value="Glycosyl_Trfase_fam3_N_dom_sf"/>
</dbReference>
<dbReference type="InterPro" id="IPR035902">
    <property type="entry name" value="Nuc_phospho_transferase"/>
</dbReference>
<dbReference type="NCBIfam" id="TIGR01245">
    <property type="entry name" value="trpD"/>
    <property type="match status" value="1"/>
</dbReference>
<dbReference type="PANTHER" id="PTHR43285">
    <property type="entry name" value="ANTHRANILATE PHOSPHORIBOSYLTRANSFERASE"/>
    <property type="match status" value="1"/>
</dbReference>
<dbReference type="PANTHER" id="PTHR43285:SF2">
    <property type="entry name" value="ANTHRANILATE PHOSPHORIBOSYLTRANSFERASE"/>
    <property type="match status" value="1"/>
</dbReference>
<dbReference type="Pfam" id="PF02885">
    <property type="entry name" value="Glycos_trans_3N"/>
    <property type="match status" value="1"/>
</dbReference>
<dbReference type="Pfam" id="PF00591">
    <property type="entry name" value="Glycos_transf_3"/>
    <property type="match status" value="1"/>
</dbReference>
<dbReference type="SUPFAM" id="SSF52418">
    <property type="entry name" value="Nucleoside phosphorylase/phosphoribosyltransferase catalytic domain"/>
    <property type="match status" value="1"/>
</dbReference>
<dbReference type="SUPFAM" id="SSF47648">
    <property type="entry name" value="Nucleoside phosphorylase/phosphoribosyltransferase N-terminal domain"/>
    <property type="match status" value="1"/>
</dbReference>
<reference key="1">
    <citation type="journal article" date="2008" name="Appl. Environ. Microbiol.">
        <title>The genome of Polaromonas sp. strain JS666: insights into the evolution of a hydrocarbon- and xenobiotic-degrading bacterium, and features of relevance to biotechnology.</title>
        <authorList>
            <person name="Mattes T.E."/>
            <person name="Alexander A.K."/>
            <person name="Richardson P.M."/>
            <person name="Munk A.C."/>
            <person name="Han C.S."/>
            <person name="Stothard P."/>
            <person name="Coleman N.V."/>
        </authorList>
    </citation>
    <scope>NUCLEOTIDE SEQUENCE [LARGE SCALE GENOMIC DNA]</scope>
    <source>
        <strain>JS666 / ATCC BAA-500</strain>
    </source>
</reference>